<reference key="1">
    <citation type="journal article" date="1989" name="Eur. J. Immunol.">
        <title>Two classes of CD1 genes.</title>
        <authorList>
            <person name="Calabi F."/>
            <person name="Jarvis J.M."/>
            <person name="Martin L."/>
            <person name="Milstein C."/>
        </authorList>
    </citation>
    <scope>NUCLEOTIDE SEQUENCE [GENOMIC DNA]</scope>
</reference>
<reference key="2">
    <citation type="journal article" date="2000" name="J. Biol. Chem.">
        <title>Characterization of CD1e, a third type of CD1 molecule expressed in dendritic cells.</title>
        <authorList>
            <person name="Angenieux C."/>
            <person name="Salamero J."/>
            <person name="Fricker D."/>
            <person name="Cazenave J.-P."/>
            <person name="Goud B."/>
            <person name="Hanau D."/>
            <person name="de La Salle H."/>
        </authorList>
    </citation>
    <scope>NUCLEOTIDE SEQUENCE [MRNA] (ISOFORMS 1; 2; 3; 4; 5; 6; 7; 8; 9; 10; 11 AND 12)</scope>
    <scope>VARIANT ARG-106</scope>
    <scope>FUNCTION</scope>
    <scope>INTERACTION WITH B2M</scope>
    <scope>PROTEOLYTIC PROCESSING</scope>
    <scope>TISSUE SPECIFICITY</scope>
    <scope>SUBCELLULAR LOCATION</scope>
</reference>
<reference key="3">
    <citation type="journal article" date="2004" name="Nat. Genet.">
        <title>Complete sequencing and characterization of 21,243 full-length human cDNAs.</title>
        <authorList>
            <person name="Ota T."/>
            <person name="Suzuki Y."/>
            <person name="Nishikawa T."/>
            <person name="Otsuki T."/>
            <person name="Sugiyama T."/>
            <person name="Irie R."/>
            <person name="Wakamatsu A."/>
            <person name="Hayashi K."/>
            <person name="Sato H."/>
            <person name="Nagai K."/>
            <person name="Kimura K."/>
            <person name="Makita H."/>
            <person name="Sekine M."/>
            <person name="Obayashi M."/>
            <person name="Nishi T."/>
            <person name="Shibahara T."/>
            <person name="Tanaka T."/>
            <person name="Ishii S."/>
            <person name="Yamamoto J."/>
            <person name="Saito K."/>
            <person name="Kawai Y."/>
            <person name="Isono Y."/>
            <person name="Nakamura Y."/>
            <person name="Nagahari K."/>
            <person name="Murakami K."/>
            <person name="Yasuda T."/>
            <person name="Iwayanagi T."/>
            <person name="Wagatsuma M."/>
            <person name="Shiratori A."/>
            <person name="Sudo H."/>
            <person name="Hosoiri T."/>
            <person name="Kaku Y."/>
            <person name="Kodaira H."/>
            <person name="Kondo H."/>
            <person name="Sugawara M."/>
            <person name="Takahashi M."/>
            <person name="Kanda K."/>
            <person name="Yokoi T."/>
            <person name="Furuya T."/>
            <person name="Kikkawa E."/>
            <person name="Omura Y."/>
            <person name="Abe K."/>
            <person name="Kamihara K."/>
            <person name="Katsuta N."/>
            <person name="Sato K."/>
            <person name="Tanikawa M."/>
            <person name="Yamazaki M."/>
            <person name="Ninomiya K."/>
            <person name="Ishibashi T."/>
            <person name="Yamashita H."/>
            <person name="Murakawa K."/>
            <person name="Fujimori K."/>
            <person name="Tanai H."/>
            <person name="Kimata M."/>
            <person name="Watanabe M."/>
            <person name="Hiraoka S."/>
            <person name="Chiba Y."/>
            <person name="Ishida S."/>
            <person name="Ono Y."/>
            <person name="Takiguchi S."/>
            <person name="Watanabe S."/>
            <person name="Yosida M."/>
            <person name="Hotuta T."/>
            <person name="Kusano J."/>
            <person name="Kanehori K."/>
            <person name="Takahashi-Fujii A."/>
            <person name="Hara H."/>
            <person name="Tanase T.-O."/>
            <person name="Nomura Y."/>
            <person name="Togiya S."/>
            <person name="Komai F."/>
            <person name="Hara R."/>
            <person name="Takeuchi K."/>
            <person name="Arita M."/>
            <person name="Imose N."/>
            <person name="Musashino K."/>
            <person name="Yuuki H."/>
            <person name="Oshima A."/>
            <person name="Sasaki N."/>
            <person name="Aotsuka S."/>
            <person name="Yoshikawa Y."/>
            <person name="Matsunawa H."/>
            <person name="Ichihara T."/>
            <person name="Shiohata N."/>
            <person name="Sano S."/>
            <person name="Moriya S."/>
            <person name="Momiyama H."/>
            <person name="Satoh N."/>
            <person name="Takami S."/>
            <person name="Terashima Y."/>
            <person name="Suzuki O."/>
            <person name="Nakagawa S."/>
            <person name="Senoh A."/>
            <person name="Mizoguchi H."/>
            <person name="Goto Y."/>
            <person name="Shimizu F."/>
            <person name="Wakebe H."/>
            <person name="Hishigaki H."/>
            <person name="Watanabe T."/>
            <person name="Sugiyama A."/>
            <person name="Takemoto M."/>
            <person name="Kawakami B."/>
            <person name="Yamazaki M."/>
            <person name="Watanabe K."/>
            <person name="Kumagai A."/>
            <person name="Itakura S."/>
            <person name="Fukuzumi Y."/>
            <person name="Fujimori Y."/>
            <person name="Komiyama M."/>
            <person name="Tashiro H."/>
            <person name="Tanigami A."/>
            <person name="Fujiwara T."/>
            <person name="Ono T."/>
            <person name="Yamada K."/>
            <person name="Fujii Y."/>
            <person name="Ozaki K."/>
            <person name="Hirao M."/>
            <person name="Ohmori Y."/>
            <person name="Kawabata A."/>
            <person name="Hikiji T."/>
            <person name="Kobatake N."/>
            <person name="Inagaki H."/>
            <person name="Ikema Y."/>
            <person name="Okamoto S."/>
            <person name="Okitani R."/>
            <person name="Kawakami T."/>
            <person name="Noguchi S."/>
            <person name="Itoh T."/>
            <person name="Shigeta K."/>
            <person name="Senba T."/>
            <person name="Matsumura K."/>
            <person name="Nakajima Y."/>
            <person name="Mizuno T."/>
            <person name="Morinaga M."/>
            <person name="Sasaki M."/>
            <person name="Togashi T."/>
            <person name="Oyama M."/>
            <person name="Hata H."/>
            <person name="Watanabe M."/>
            <person name="Komatsu T."/>
            <person name="Mizushima-Sugano J."/>
            <person name="Satoh T."/>
            <person name="Shirai Y."/>
            <person name="Takahashi Y."/>
            <person name="Nakagawa K."/>
            <person name="Okumura K."/>
            <person name="Nagase T."/>
            <person name="Nomura N."/>
            <person name="Kikuchi H."/>
            <person name="Masuho Y."/>
            <person name="Yamashita R."/>
            <person name="Nakai K."/>
            <person name="Yada T."/>
            <person name="Nakamura Y."/>
            <person name="Ohara O."/>
            <person name="Isogai T."/>
            <person name="Sugano S."/>
        </authorList>
    </citation>
    <scope>NUCLEOTIDE SEQUENCE [LARGE SCALE MRNA] (ISOFORM 1)</scope>
    <scope>NUCLEOTIDE SEQUENCE [LARGE SCALE MRNA] OF 1-386 (ISOFORM 13)</scope>
    <source>
        <tissue>Thymus</tissue>
    </source>
</reference>
<reference key="4">
    <citation type="journal article" date="2006" name="Nature">
        <title>The DNA sequence and biological annotation of human chromosome 1.</title>
        <authorList>
            <person name="Gregory S.G."/>
            <person name="Barlow K.F."/>
            <person name="McLay K.E."/>
            <person name="Kaul R."/>
            <person name="Swarbreck D."/>
            <person name="Dunham A."/>
            <person name="Scott C.E."/>
            <person name="Howe K.L."/>
            <person name="Woodfine K."/>
            <person name="Spencer C.C.A."/>
            <person name="Jones M.C."/>
            <person name="Gillson C."/>
            <person name="Searle S."/>
            <person name="Zhou Y."/>
            <person name="Kokocinski F."/>
            <person name="McDonald L."/>
            <person name="Evans R."/>
            <person name="Phillips K."/>
            <person name="Atkinson A."/>
            <person name="Cooper R."/>
            <person name="Jones C."/>
            <person name="Hall R.E."/>
            <person name="Andrews T.D."/>
            <person name="Lloyd C."/>
            <person name="Ainscough R."/>
            <person name="Almeida J.P."/>
            <person name="Ambrose K.D."/>
            <person name="Anderson F."/>
            <person name="Andrew R.W."/>
            <person name="Ashwell R.I.S."/>
            <person name="Aubin K."/>
            <person name="Babbage A.K."/>
            <person name="Bagguley C.L."/>
            <person name="Bailey J."/>
            <person name="Beasley H."/>
            <person name="Bethel G."/>
            <person name="Bird C.P."/>
            <person name="Bray-Allen S."/>
            <person name="Brown J.Y."/>
            <person name="Brown A.J."/>
            <person name="Buckley D."/>
            <person name="Burton J."/>
            <person name="Bye J."/>
            <person name="Carder C."/>
            <person name="Chapman J.C."/>
            <person name="Clark S.Y."/>
            <person name="Clarke G."/>
            <person name="Clee C."/>
            <person name="Cobley V."/>
            <person name="Collier R.E."/>
            <person name="Corby N."/>
            <person name="Coville G.J."/>
            <person name="Davies J."/>
            <person name="Deadman R."/>
            <person name="Dunn M."/>
            <person name="Earthrowl M."/>
            <person name="Ellington A.G."/>
            <person name="Errington H."/>
            <person name="Frankish A."/>
            <person name="Frankland J."/>
            <person name="French L."/>
            <person name="Garner P."/>
            <person name="Garnett J."/>
            <person name="Gay L."/>
            <person name="Ghori M.R.J."/>
            <person name="Gibson R."/>
            <person name="Gilby L.M."/>
            <person name="Gillett W."/>
            <person name="Glithero R.J."/>
            <person name="Grafham D.V."/>
            <person name="Griffiths C."/>
            <person name="Griffiths-Jones S."/>
            <person name="Grocock R."/>
            <person name="Hammond S."/>
            <person name="Harrison E.S.I."/>
            <person name="Hart E."/>
            <person name="Haugen E."/>
            <person name="Heath P.D."/>
            <person name="Holmes S."/>
            <person name="Holt K."/>
            <person name="Howden P.J."/>
            <person name="Hunt A.R."/>
            <person name="Hunt S.E."/>
            <person name="Hunter G."/>
            <person name="Isherwood J."/>
            <person name="James R."/>
            <person name="Johnson C."/>
            <person name="Johnson D."/>
            <person name="Joy A."/>
            <person name="Kay M."/>
            <person name="Kershaw J.K."/>
            <person name="Kibukawa M."/>
            <person name="Kimberley A.M."/>
            <person name="King A."/>
            <person name="Knights A.J."/>
            <person name="Lad H."/>
            <person name="Laird G."/>
            <person name="Lawlor S."/>
            <person name="Leongamornlert D.A."/>
            <person name="Lloyd D.M."/>
            <person name="Loveland J."/>
            <person name="Lovell J."/>
            <person name="Lush M.J."/>
            <person name="Lyne R."/>
            <person name="Martin S."/>
            <person name="Mashreghi-Mohammadi M."/>
            <person name="Matthews L."/>
            <person name="Matthews N.S.W."/>
            <person name="McLaren S."/>
            <person name="Milne S."/>
            <person name="Mistry S."/>
            <person name="Moore M.J.F."/>
            <person name="Nickerson T."/>
            <person name="O'Dell C.N."/>
            <person name="Oliver K."/>
            <person name="Palmeiri A."/>
            <person name="Palmer S.A."/>
            <person name="Parker A."/>
            <person name="Patel D."/>
            <person name="Pearce A.V."/>
            <person name="Peck A.I."/>
            <person name="Pelan S."/>
            <person name="Phelps K."/>
            <person name="Phillimore B.J."/>
            <person name="Plumb R."/>
            <person name="Rajan J."/>
            <person name="Raymond C."/>
            <person name="Rouse G."/>
            <person name="Saenphimmachak C."/>
            <person name="Sehra H.K."/>
            <person name="Sheridan E."/>
            <person name="Shownkeen R."/>
            <person name="Sims S."/>
            <person name="Skuce C.D."/>
            <person name="Smith M."/>
            <person name="Steward C."/>
            <person name="Subramanian S."/>
            <person name="Sycamore N."/>
            <person name="Tracey A."/>
            <person name="Tromans A."/>
            <person name="Van Helmond Z."/>
            <person name="Wall M."/>
            <person name="Wallis J.M."/>
            <person name="White S."/>
            <person name="Whitehead S.L."/>
            <person name="Wilkinson J.E."/>
            <person name="Willey D.L."/>
            <person name="Williams H."/>
            <person name="Wilming L."/>
            <person name="Wray P.W."/>
            <person name="Wu Z."/>
            <person name="Coulson A."/>
            <person name="Vaudin M."/>
            <person name="Sulston J.E."/>
            <person name="Durbin R.M."/>
            <person name="Hubbard T."/>
            <person name="Wooster R."/>
            <person name="Dunham I."/>
            <person name="Carter N.P."/>
            <person name="McVean G."/>
            <person name="Ross M.T."/>
            <person name="Harrow J."/>
            <person name="Olson M.V."/>
            <person name="Beck S."/>
            <person name="Rogers J."/>
            <person name="Bentley D.R."/>
        </authorList>
    </citation>
    <scope>NUCLEOTIDE SEQUENCE [LARGE SCALE GENOMIC DNA] (ALLELE CD1E*01)</scope>
</reference>
<reference key="5">
    <citation type="submission" date="2005-09" db="EMBL/GenBank/DDBJ databases">
        <authorList>
            <person name="Mural R.J."/>
            <person name="Istrail S."/>
            <person name="Sutton G.G."/>
            <person name="Florea L."/>
            <person name="Halpern A.L."/>
            <person name="Mobarry C.M."/>
            <person name="Lippert R."/>
            <person name="Walenz B."/>
            <person name="Shatkay H."/>
            <person name="Dew I."/>
            <person name="Miller J.R."/>
            <person name="Flanigan M.J."/>
            <person name="Edwards N.J."/>
            <person name="Bolanos R."/>
            <person name="Fasulo D."/>
            <person name="Halldorsson B.V."/>
            <person name="Hannenhalli S."/>
            <person name="Turner R."/>
            <person name="Yooseph S."/>
            <person name="Lu F."/>
            <person name="Nusskern D.R."/>
            <person name="Shue B.C."/>
            <person name="Zheng X.H."/>
            <person name="Zhong F."/>
            <person name="Delcher A.L."/>
            <person name="Huson D.H."/>
            <person name="Kravitz S.A."/>
            <person name="Mouchard L."/>
            <person name="Reinert K."/>
            <person name="Remington K.A."/>
            <person name="Clark A.G."/>
            <person name="Waterman M.S."/>
            <person name="Eichler E.E."/>
            <person name="Adams M.D."/>
            <person name="Hunkapiller M.W."/>
            <person name="Myers E.W."/>
            <person name="Venter J.C."/>
        </authorList>
    </citation>
    <scope>NUCLEOTIDE SEQUENCE [LARGE SCALE GENOMIC DNA] (ALLELES CD1E*01)</scope>
</reference>
<reference key="6">
    <citation type="journal article" date="1999" name="Tissue Antigens">
        <title>Polymorphism of human CD1 genes.</title>
        <authorList>
            <person name="Han M."/>
            <person name="Hannick L.I."/>
            <person name="DiBrino M."/>
            <person name="Robinson M.A."/>
        </authorList>
    </citation>
    <scope>NUCLEOTIDE SEQUENCE [GENOMIC DNA] OF 30-118</scope>
    <scope>VARIANT ARG-106</scope>
</reference>
<reference key="7">
    <citation type="journal article" date="2002" name="Tissue Antigens">
        <title>Two novel CD1 E alleles identified in black African individuals.</title>
        <authorList>
            <person name="Tamouza R."/>
            <person name="Sghiri R."/>
            <person name="Ramasawmy R."/>
            <person name="Neonato M.G."/>
            <person name="Mombo L.E."/>
            <person name="Poirier J.C."/>
            <person name="Schaeffer V."/>
            <person name="Fortier C."/>
            <person name="Labie D."/>
            <person name="Girot R."/>
            <person name="Toubert A."/>
            <person name="Krishnamoorthy R."/>
            <person name="Charron D."/>
        </authorList>
    </citation>
    <scope>NUCLEOTIDE SEQUENCE [GENOMIC DNA] OF 31-208 (ALLELES CD1E*05 AND CD1E*06)</scope>
    <scope>POLYMORPHISM</scope>
    <scope>VARIANTS ARG-102; ARG-106; ASN-149 AND TRP-164</scope>
</reference>
<reference key="8">
    <citation type="journal article" date="2000" name="Tissue Antigens">
        <title>Identification of two novel human CD1E alleles.</title>
        <authorList>
            <person name="Mirones I."/>
            <person name="Oteo M."/>
            <person name="Parra-Cuadrado J.F."/>
            <person name="Martinez-Naves E."/>
        </authorList>
    </citation>
    <scope>NUCLEOTIDE SEQUENCE [GENOMIC DNA] OF 120-208 (ALLELES CD1E*03 AND CD1E*04)</scope>
    <scope>POLYMORPHISM</scope>
    <scope>VARIANTS TRP-164 AND PRO-194</scope>
</reference>
<reference key="9">
    <citation type="journal article" date="1986" name="Proc. Natl. Acad. Sci. U.S.A.">
        <title>Isolation of CD1 genes: a family of major histocompatibility complex-related differentiation antigens.</title>
        <authorList>
            <person name="Martin L.H."/>
            <person name="Calabi F."/>
            <person name="Milstein C."/>
        </authorList>
    </citation>
    <scope>NUCLEOTIDE SEQUENCE [GENOMIC DNA] OF 209-301</scope>
</reference>
<reference key="10">
    <citation type="journal article" date="2005" name="Science">
        <title>Assistance of microbial glycolipid antigen processing by CD1e.</title>
        <authorList>
            <person name="de la Salle H."/>
            <person name="Mariotti S."/>
            <person name="Angenieux C."/>
            <person name="Gilleron M."/>
            <person name="Garcia-Alles L.-F."/>
            <person name="Malm D."/>
            <person name="Berg T."/>
            <person name="Paoletti S."/>
            <person name="Maitre B."/>
            <person name="Mourey L."/>
            <person name="Salamero J."/>
            <person name="Cazenave J.-P."/>
            <person name="Hanau D."/>
            <person name="Mori L."/>
            <person name="Puzo G."/>
            <person name="De Libero G."/>
        </authorList>
    </citation>
    <scope>FUNCTION</scope>
</reference>
<reference key="11">
    <citation type="journal article" date="2008" name="Traffic">
        <title>Control of the intracellular pathway of CD1e.</title>
        <authorList>
            <person name="Maitre B."/>
            <person name="Angenieux C."/>
            <person name="Salamero J."/>
            <person name="Hanau D."/>
            <person name="Fricker D."/>
            <person name="Signorino F."/>
            <person name="Proamer F."/>
            <person name="Cazenave J.-P."/>
            <person name="Goud B."/>
            <person name="Tourne S."/>
            <person name="de la Salle H."/>
        </authorList>
    </citation>
    <scope>SUBCELLULAR LOCATION</scope>
    <scope>UBIQUITINATION</scope>
    <scope>PROTEOLYTIC PROCESSING</scope>
</reference>
<reference key="12">
    <citation type="journal article" date="2009" name="Biochem. J.">
        <title>The assembly of CD1e is controlled by an N-terminal propeptide which is processed in endosomal compartments.</title>
        <authorList>
            <person name="Maitre B."/>
            <person name="Angenieux C."/>
            <person name="Wurtz V."/>
            <person name="Layre E."/>
            <person name="Gilleron M."/>
            <person name="Collmann A."/>
            <person name="Mariotti S."/>
            <person name="Mori L."/>
            <person name="Fricker D."/>
            <person name="Cazenave J.P."/>
            <person name="van Dorsselaer A."/>
            <person name="Gachet C."/>
            <person name="de Libero G."/>
            <person name="Puzo G."/>
            <person name="Hanau D."/>
            <person name="de la Salle H."/>
        </authorList>
    </citation>
    <scope>PROTEOLYTIC PROCESSING</scope>
    <scope>SUBCELLULAR LOCATION</scope>
</reference>
<reference key="13">
    <citation type="journal article" date="2008" name="J. Immunol.">
        <title>A naturally occurring mutation in CD1e impairs lipid antigen presentation.</title>
        <authorList>
            <person name="Tourne S."/>
            <person name="Maitre B."/>
            <person name="Collmann A."/>
            <person name="Layre E."/>
            <person name="Mariotti S."/>
            <person name="Signorino-Gelo F."/>
            <person name="Loch C."/>
            <person name="Salamero J."/>
            <person name="Gilleron M."/>
            <person name="Angenieux C."/>
            <person name="Cazenave J.P."/>
            <person name="Mori L."/>
            <person name="Hanau D."/>
            <person name="Puzo G."/>
            <person name="De Libero G."/>
            <person name="de la Salle H."/>
        </authorList>
    </citation>
    <scope>POLYMORPHISM</scope>
    <scope>VARIANT PRO-194</scope>
</reference>
<reference key="14">
    <citation type="journal article" date="2011" name="Proc. Natl. Acad. Sci. U.S.A.">
        <title>Crystal structure of human CD1e reveals a groove suited for lipid-exchange processes.</title>
        <authorList>
            <person name="Garcia-Alles L.F."/>
            <person name="Giacometti G."/>
            <person name="Versluis C."/>
            <person name="Maveyraud L."/>
            <person name="de Paepe D."/>
            <person name="Guiard J."/>
            <person name="Tranier S."/>
            <person name="Gilleron M."/>
            <person name="Prandi J."/>
            <person name="Hanau D."/>
            <person name="Heck A.J."/>
            <person name="Mori L."/>
            <person name="De Libero G."/>
            <person name="Puzo G."/>
            <person name="Mourey L."/>
            <person name="de la Salle H."/>
        </authorList>
    </citation>
    <scope>X-RAY CRYSTALLOGRAPHY (2.9 ANGSTROMS) OF 32-303 IN COMPLEX WITH B2M</scope>
    <scope>FUNCTION</scope>
    <scope>LIPID-BINDING</scope>
    <scope>SUBUNIT</scope>
</reference>
<keyword id="KW-0002">3D-structure</keyword>
<keyword id="KW-1064">Adaptive immunity</keyword>
<keyword id="KW-0025">Alternative splicing</keyword>
<keyword id="KW-1015">Disulfide bond</keyword>
<keyword id="KW-0967">Endosome</keyword>
<keyword id="KW-0325">Glycoprotein</keyword>
<keyword id="KW-0333">Golgi apparatus</keyword>
<keyword id="KW-0391">Immunity</keyword>
<keyword id="KW-0393">Immunoglobulin domain</keyword>
<keyword id="KW-0446">Lipid-binding</keyword>
<keyword id="KW-0458">Lysosome</keyword>
<keyword id="KW-0472">Membrane</keyword>
<keyword id="KW-1267">Proteomics identification</keyword>
<keyword id="KW-1185">Reference proteome</keyword>
<keyword id="KW-0732">Signal</keyword>
<keyword id="KW-0812">Transmembrane</keyword>
<keyword id="KW-1133">Transmembrane helix</keyword>
<keyword id="KW-0832">Ubl conjugation</keyword>
<comment type="function">
    <text evidence="4 7 11">T-cell surface glycoprotein CD1e, soluble binds diacetylated lipids, including phosphatidyl inositides and diacylated sulfoglycolipids, and is required for the presentation of glycolipid antigens on the cell surface. The membrane-associated form is not active.</text>
</comment>
<comment type="subunit">
    <text evidence="11">Heterodimer with B2M (beta-2-microglobulin). The association with B2M appears to be facilitated by the presence of the propeptide.</text>
</comment>
<comment type="subcellular location">
    <molecule>T-cell surface glycoprotein CD1e, membrane-associated</molecule>
    <subcellularLocation>
        <location>Golgi apparatus membrane</location>
        <topology>Single-pass type I membrane protein</topology>
    </subcellularLocation>
    <subcellularLocation>
        <location>Early endosome</location>
    </subcellularLocation>
    <subcellularLocation>
        <location>Late endosome</location>
    </subcellularLocation>
    <text>Predominantly localized in the trans-Golgi network in immature dendritic cells, and as a cleaved, soluble protein in the lysosome lumen of mature dendritic cells.</text>
</comment>
<comment type="subcellular location">
    <molecule>T-cell surface glycoprotein CD1e, soluble</molecule>
    <subcellularLocation>
        <location>Lysosome lumen</location>
    </subcellularLocation>
</comment>
<comment type="alternative products">
    <event type="alternative splicing"/>
    <isoform>
        <id>P15812-1</id>
        <name>1</name>
        <sequence type="displayed"/>
    </isoform>
    <isoform>
        <id>P15812-2</id>
        <name>2</name>
        <sequence type="described" ref="VSP_037713"/>
    </isoform>
    <isoform>
        <id>P15812-3</id>
        <name>3</name>
        <sequence type="described" ref="VSP_037711 VSP_037712"/>
    </isoform>
    <isoform>
        <id>P15812-4</id>
        <name>4</name>
        <sequence type="described" ref="VSP_037710 VSP_037713"/>
    </isoform>
    <isoform>
        <id>P15812-5</id>
        <name>5</name>
        <sequence type="described" ref="VSP_037709"/>
    </isoform>
    <isoform>
        <id>P15812-6</id>
        <name>6</name>
        <sequence type="described" ref="VSP_037709 VSP_037713"/>
    </isoform>
    <isoform>
        <id>P15812-7</id>
        <name>7</name>
        <sequence type="described" ref="VSP_037709 VSP_037710 VSP_037713"/>
    </isoform>
    <isoform>
        <id>P15812-8</id>
        <name>8</name>
        <sequence type="described" ref="VSP_037708"/>
    </isoform>
    <isoform>
        <id>P15812-9</id>
        <name>9</name>
        <sequence type="described" ref="VSP_037708 VSP_037713"/>
    </isoform>
    <isoform>
        <id>P15812-10</id>
        <name>10</name>
        <sequence type="described" ref="VSP_037708 VSP_037711 VSP_037712"/>
    </isoform>
    <isoform>
        <id>P15812-11</id>
        <name>11</name>
        <sequence type="described" ref="VSP_037708 VSP_037710"/>
    </isoform>
    <isoform>
        <id>P15812-12</id>
        <name>12</name>
        <sequence type="described" ref="VSP_037708 VSP_037710 VSP_037713"/>
    </isoform>
    <isoform>
        <id>P15812-13</id>
        <name>13</name>
        <sequence type="described" ref="VSP_046961"/>
    </isoform>
</comment>
<comment type="tissue specificity">
    <text evidence="4">Expressed on cortical thymocytes, dendritic cells, Langerhans cells, on certain T-cell leukemias, and in various other tissues.</text>
</comment>
<comment type="PTM">
    <text evidence="8">Mono-ubiquitinated.</text>
</comment>
<comment type="PTM">
    <text evidence="4 8 10">Proteolytically cleaved in late endosomes to yield a soluble form.</text>
</comment>
<comment type="polymorphism">
    <text evidence="5 6 9">Six alleles of CD1E are known. CD1E*01 has His-102/Gln-106/Ser-149/Arg-164/Leu-194, CD1E*02 has His-102/Arg-106/Ser-149/Arg-164/Leu-194, CD1E*03 (9L) has His-102/Gln-106/Ser-149/Trp-164/Leu-194, CD1E*04 (15L) has His-102/Gln-106/Ser-149/Arg-164/Pro-194, CD1E*05 has Arg-102/Arg-106/Ser-149/Arg-164/Leu-194 and CD1E*06 has His-102/Arg-106/Asn-149/Arg-164/Leu-194 (PubMed:11019917, PubMed:12144626, PubMed:18325888). The sequence shown is that of allele CD1E*01.</text>
</comment>
<comment type="sequence caution" evidence="14">
    <conflict type="erroneous gene model prediction">
        <sequence resource="EMBL-CDS" id="CAA33100"/>
    </conflict>
</comment>
<gene>
    <name type="primary">CD1E</name>
</gene>
<sequence>MLLLFLLFEGLCCPGENTAAPQALQSYHLAAEEQLSFRMLQTSSFANHSWAHSEGSGWLGDLQTHGWDTVLGTIRFLKPWSHGNFSKQELKNLQSLFQLYFHSFIQIVQASAGQFQLEYPFEIQILAGCRMNAPQIFLNMAYQGSDFLSFQGISWEPSPGAGIRAQNICKVLNRYLDIKEILQSLLGHTCPRFLAGLMEAGESELKRKVKPEAWLSCGPSPGPGRLQLVCHVSGFYPKPVWVMWMRGEQEQRGTQRGDVLPNADETWYLRATLDVAAGEAAGLSCRVKHSSLGGHDLIIHWGGYSIFLILICLTVIVTLVILVVVDSRLKKQSSNKNILSPHTPSPVFLMGANTQDTKNSRHQFCLAQVSWIKNRVLKKWKTRLNQLW</sequence>
<dbReference type="EMBL" id="X14975">
    <property type="protein sequence ID" value="CAA33100.1"/>
    <property type="status" value="ALT_SEQ"/>
    <property type="molecule type" value="Genomic_DNA"/>
</dbReference>
<dbReference type="EMBL" id="AJ289111">
    <property type="protein sequence ID" value="CAB93150.1"/>
    <property type="molecule type" value="mRNA"/>
</dbReference>
<dbReference type="EMBL" id="AJ289112">
    <property type="protein sequence ID" value="CAB93151.1"/>
    <property type="molecule type" value="mRNA"/>
</dbReference>
<dbReference type="EMBL" id="AJ289113">
    <property type="protein sequence ID" value="CAB93152.1"/>
    <property type="molecule type" value="mRNA"/>
</dbReference>
<dbReference type="EMBL" id="AJ289114">
    <property type="protein sequence ID" value="CAB93153.1"/>
    <property type="molecule type" value="mRNA"/>
</dbReference>
<dbReference type="EMBL" id="AJ289115">
    <property type="protein sequence ID" value="CAB93154.1"/>
    <property type="molecule type" value="mRNA"/>
</dbReference>
<dbReference type="EMBL" id="AJ289116">
    <property type="protein sequence ID" value="CAB93155.1"/>
    <property type="molecule type" value="mRNA"/>
</dbReference>
<dbReference type="EMBL" id="AJ289117">
    <property type="protein sequence ID" value="CAB93156.1"/>
    <property type="molecule type" value="mRNA"/>
</dbReference>
<dbReference type="EMBL" id="AJ289118">
    <property type="protein sequence ID" value="CAB93157.1"/>
    <property type="molecule type" value="mRNA"/>
</dbReference>
<dbReference type="EMBL" id="AJ289119">
    <property type="protein sequence ID" value="CAB93158.1"/>
    <property type="molecule type" value="mRNA"/>
</dbReference>
<dbReference type="EMBL" id="AJ289120">
    <property type="protein sequence ID" value="CAB93159.1"/>
    <property type="molecule type" value="mRNA"/>
</dbReference>
<dbReference type="EMBL" id="AJ289121">
    <property type="protein sequence ID" value="CAB93160.1"/>
    <property type="molecule type" value="mRNA"/>
</dbReference>
<dbReference type="EMBL" id="AJ289122">
    <property type="protein sequence ID" value="CAB93161.1"/>
    <property type="molecule type" value="mRNA"/>
</dbReference>
<dbReference type="EMBL" id="AK303108">
    <property type="protein sequence ID" value="BAG64215.1"/>
    <property type="molecule type" value="mRNA"/>
</dbReference>
<dbReference type="EMBL" id="AK311643">
    <property type="status" value="NOT_ANNOTATED_CDS"/>
    <property type="molecule type" value="mRNA"/>
</dbReference>
<dbReference type="EMBL" id="AL121986">
    <property type="status" value="NOT_ANNOTATED_CDS"/>
    <property type="molecule type" value="Genomic_DNA"/>
</dbReference>
<dbReference type="EMBL" id="CH471121">
    <property type="protein sequence ID" value="EAW52828.1"/>
    <property type="molecule type" value="Genomic_DNA"/>
</dbReference>
<dbReference type="EMBL" id="CH471121">
    <property type="protein sequence ID" value="EAW52830.1"/>
    <property type="molecule type" value="Genomic_DNA"/>
</dbReference>
<dbReference type="EMBL" id="CH471121">
    <property type="protein sequence ID" value="EAW52831.1"/>
    <property type="molecule type" value="Genomic_DNA"/>
</dbReference>
<dbReference type="EMBL" id="CH471121">
    <property type="protein sequence ID" value="EAW52832.1"/>
    <property type="molecule type" value="Genomic_DNA"/>
</dbReference>
<dbReference type="EMBL" id="CH471121">
    <property type="protein sequence ID" value="EAW52833.1"/>
    <property type="molecule type" value="Genomic_DNA"/>
</dbReference>
<dbReference type="EMBL" id="CH471121">
    <property type="protein sequence ID" value="EAW52834.1"/>
    <property type="molecule type" value="Genomic_DNA"/>
</dbReference>
<dbReference type="EMBL" id="CH471121">
    <property type="protein sequence ID" value="EAW52835.1"/>
    <property type="molecule type" value="Genomic_DNA"/>
</dbReference>
<dbReference type="EMBL" id="CH471121">
    <property type="protein sequence ID" value="EAW52837.1"/>
    <property type="molecule type" value="Genomic_DNA"/>
</dbReference>
<dbReference type="EMBL" id="CH471121">
    <property type="protein sequence ID" value="EAW52838.1"/>
    <property type="molecule type" value="Genomic_DNA"/>
</dbReference>
<dbReference type="EMBL" id="CH471121">
    <property type="protein sequence ID" value="EAW52839.1"/>
    <property type="molecule type" value="Genomic_DNA"/>
</dbReference>
<dbReference type="EMBL" id="CH471121">
    <property type="protein sequence ID" value="EAW52840.1"/>
    <property type="molecule type" value="Genomic_DNA"/>
</dbReference>
<dbReference type="EMBL" id="AF142669">
    <property type="protein sequence ID" value="AAD37582.1"/>
    <property type="molecule type" value="Genomic_DNA"/>
</dbReference>
<dbReference type="EMBL" id="AH010757">
    <property type="protein sequence ID" value="AAK52913.1"/>
    <property type="molecule type" value="Genomic_DNA"/>
</dbReference>
<dbReference type="EMBL" id="AH010758">
    <property type="protein sequence ID" value="AAK52914.1"/>
    <property type="molecule type" value="Genomic_DNA"/>
</dbReference>
<dbReference type="EMBL" id="AJ251334">
    <property type="protein sequence ID" value="CAB82829.1"/>
    <property type="molecule type" value="Genomic_DNA"/>
</dbReference>
<dbReference type="EMBL" id="AJ251335">
    <property type="protein sequence ID" value="CAC07175.1"/>
    <property type="molecule type" value="Genomic_DNA"/>
</dbReference>
<dbReference type="EMBL" id="M14666">
    <property type="protein sequence ID" value="AAA51937.1"/>
    <property type="molecule type" value="Genomic_DNA"/>
</dbReference>
<dbReference type="CCDS" id="CCDS41417.1">
    <molecule id="P15812-1"/>
</dbReference>
<dbReference type="CCDS" id="CCDS41418.1">
    <molecule id="P15812-2"/>
</dbReference>
<dbReference type="CCDS" id="CCDS41419.1">
    <molecule id="P15812-4"/>
</dbReference>
<dbReference type="CCDS" id="CCDS41420.1">
    <molecule id="P15812-9"/>
</dbReference>
<dbReference type="CCDS" id="CCDS41421.1">
    <molecule id="P15812-3"/>
</dbReference>
<dbReference type="CCDS" id="CCDS41422.1">
    <molecule id="P15812-10"/>
</dbReference>
<dbReference type="CCDS" id="CCDS53384.1">
    <molecule id="P15812-7"/>
</dbReference>
<dbReference type="CCDS" id="CCDS53385.1">
    <molecule id="P15812-5"/>
</dbReference>
<dbReference type="CCDS" id="CCDS53386.1">
    <molecule id="P15812-6"/>
</dbReference>
<dbReference type="CCDS" id="CCDS53387.1">
    <molecule id="P15812-13"/>
</dbReference>
<dbReference type="CCDS" id="CCDS53388.1">
    <molecule id="P15812-11"/>
</dbReference>
<dbReference type="CCDS" id="CCDS53389.1">
    <molecule id="P15812-12"/>
</dbReference>
<dbReference type="CCDS" id="CCDS53390.1">
    <molecule id="P15812-8"/>
</dbReference>
<dbReference type="PIR" id="S07716">
    <property type="entry name" value="HLHUR2"/>
</dbReference>
<dbReference type="RefSeq" id="NP_001036048.1">
    <molecule id="P15812-2"/>
    <property type="nucleotide sequence ID" value="NM_001042583.3"/>
</dbReference>
<dbReference type="RefSeq" id="NP_001036049.1">
    <molecule id="P15812-3"/>
    <property type="nucleotide sequence ID" value="NM_001042584.3"/>
</dbReference>
<dbReference type="RefSeq" id="NP_001036050.1">
    <molecule id="P15812-4"/>
    <property type="nucleotide sequence ID" value="NM_001042585.3"/>
</dbReference>
<dbReference type="RefSeq" id="NP_001036051.1">
    <molecule id="P15812-9"/>
    <property type="nucleotide sequence ID" value="NM_001042586.3"/>
</dbReference>
<dbReference type="RefSeq" id="NP_001036052.1">
    <molecule id="P15812-10"/>
    <property type="nucleotide sequence ID" value="NM_001042587.3"/>
</dbReference>
<dbReference type="RefSeq" id="NP_001172036.1">
    <molecule id="P15812-5"/>
    <property type="nucleotide sequence ID" value="NM_001185107.2"/>
</dbReference>
<dbReference type="RefSeq" id="NP_001172037.1">
    <molecule id="P15812-7"/>
    <property type="nucleotide sequence ID" value="NM_001185108.2"/>
</dbReference>
<dbReference type="RefSeq" id="NP_001172039.1">
    <molecule id="P15812-12"/>
    <property type="nucleotide sequence ID" value="NM_001185110.2"/>
</dbReference>
<dbReference type="RefSeq" id="NP_001172041.1">
    <molecule id="P15812-8"/>
    <property type="nucleotide sequence ID" value="NM_001185112.2"/>
</dbReference>
<dbReference type="RefSeq" id="NP_001172042.1">
    <molecule id="P15812-11"/>
    <property type="nucleotide sequence ID" value="NM_001185113.2"/>
</dbReference>
<dbReference type="RefSeq" id="NP_001172043.1">
    <molecule id="P15812-13"/>
    <property type="nucleotide sequence ID" value="NM_001185114.2"/>
</dbReference>
<dbReference type="RefSeq" id="NP_001172044.1">
    <molecule id="P15812-6"/>
    <property type="nucleotide sequence ID" value="NM_001185115.2"/>
</dbReference>
<dbReference type="RefSeq" id="NP_112155.2">
    <molecule id="P15812-1"/>
    <property type="nucleotide sequence ID" value="NM_030893.4"/>
</dbReference>
<dbReference type="RefSeq" id="XP_011508436.1">
    <property type="nucleotide sequence ID" value="XM_011510134.2"/>
</dbReference>
<dbReference type="PDB" id="3S6C">
    <property type="method" value="X-ray"/>
    <property type="resolution" value="2.90 A"/>
    <property type="chains" value="A=32-303"/>
</dbReference>
<dbReference type="PDBsum" id="3S6C"/>
<dbReference type="SMR" id="P15812"/>
<dbReference type="BioGRID" id="107351">
    <property type="interactions" value="45"/>
</dbReference>
<dbReference type="FunCoup" id="P15812">
    <property type="interactions" value="308"/>
</dbReference>
<dbReference type="IntAct" id="P15812">
    <property type="interactions" value="34"/>
</dbReference>
<dbReference type="STRING" id="9606.ENSP00000357149"/>
<dbReference type="GlyCosmos" id="P15812">
    <property type="glycosylation" value="2 sites, No reported glycans"/>
</dbReference>
<dbReference type="GlyGen" id="P15812">
    <property type="glycosylation" value="2 sites"/>
</dbReference>
<dbReference type="iPTMnet" id="P15812"/>
<dbReference type="PhosphoSitePlus" id="P15812"/>
<dbReference type="BioMuta" id="CD1E"/>
<dbReference type="DMDM" id="254763260"/>
<dbReference type="MassIVE" id="P15812"/>
<dbReference type="PaxDb" id="9606-ENSP00000357149"/>
<dbReference type="PeptideAtlas" id="P15812"/>
<dbReference type="ProteomicsDB" id="17260"/>
<dbReference type="ProteomicsDB" id="53210">
    <molecule id="P15812-1"/>
</dbReference>
<dbReference type="ProteomicsDB" id="53212">
    <molecule id="P15812-11"/>
</dbReference>
<dbReference type="ProteomicsDB" id="53213">
    <molecule id="P15812-12"/>
</dbReference>
<dbReference type="ProteomicsDB" id="53214">
    <molecule id="P15812-2"/>
</dbReference>
<dbReference type="ProteomicsDB" id="53215">
    <molecule id="P15812-3"/>
</dbReference>
<dbReference type="ProteomicsDB" id="53216">
    <molecule id="P15812-4"/>
</dbReference>
<dbReference type="ProteomicsDB" id="53217">
    <molecule id="P15812-5"/>
</dbReference>
<dbReference type="ProteomicsDB" id="53218">
    <molecule id="P15812-6"/>
</dbReference>
<dbReference type="ProteomicsDB" id="53219">
    <molecule id="P15812-7"/>
</dbReference>
<dbReference type="ProteomicsDB" id="53220">
    <molecule id="P15812-8"/>
</dbReference>
<dbReference type="ProteomicsDB" id="53221">
    <molecule id="P15812-9"/>
</dbReference>
<dbReference type="Antibodypedia" id="55004">
    <property type="antibodies" value="256 antibodies from 25 providers"/>
</dbReference>
<dbReference type="DNASU" id="913"/>
<dbReference type="Ensembl" id="ENST00000368154.5">
    <molecule id="P15812-11"/>
    <property type="protein sequence ID" value="ENSP00000357136.1"/>
    <property type="gene ID" value="ENSG00000158488.16"/>
</dbReference>
<dbReference type="Ensembl" id="ENST00000368155.7">
    <molecule id="P15812-7"/>
    <property type="protein sequence ID" value="ENSP00000357137.3"/>
    <property type="gene ID" value="ENSG00000158488.16"/>
</dbReference>
<dbReference type="Ensembl" id="ENST00000368156.5">
    <molecule id="P15812-6"/>
    <property type="protein sequence ID" value="ENSP00000357138.1"/>
    <property type="gene ID" value="ENSG00000158488.16"/>
</dbReference>
<dbReference type="Ensembl" id="ENST00000368157.5">
    <molecule id="P15812-12"/>
    <property type="protein sequence ID" value="ENSP00000357139.1"/>
    <property type="gene ID" value="ENSG00000158488.16"/>
</dbReference>
<dbReference type="Ensembl" id="ENST00000368160.7">
    <molecule id="P15812-2"/>
    <property type="protein sequence ID" value="ENSP00000357142.3"/>
    <property type="gene ID" value="ENSG00000158488.16"/>
</dbReference>
<dbReference type="Ensembl" id="ENST00000368161.7">
    <molecule id="P15812-3"/>
    <property type="protein sequence ID" value="ENSP00000357143.3"/>
    <property type="gene ID" value="ENSG00000158488.16"/>
</dbReference>
<dbReference type="Ensembl" id="ENST00000368163.7">
    <molecule id="P15812-4"/>
    <property type="protein sequence ID" value="ENSP00000357145.3"/>
    <property type="gene ID" value="ENSG00000158488.16"/>
</dbReference>
<dbReference type="Ensembl" id="ENST00000368164.7">
    <molecule id="P15812-10"/>
    <property type="protein sequence ID" value="ENSP00000357146.3"/>
    <property type="gene ID" value="ENSG00000158488.16"/>
</dbReference>
<dbReference type="Ensembl" id="ENST00000368165.7">
    <molecule id="P15812-5"/>
    <property type="protein sequence ID" value="ENSP00000357147.3"/>
    <property type="gene ID" value="ENSG00000158488.16"/>
</dbReference>
<dbReference type="Ensembl" id="ENST00000368166.7">
    <molecule id="P15812-9"/>
    <property type="protein sequence ID" value="ENSP00000357148.3"/>
    <property type="gene ID" value="ENSG00000158488.16"/>
</dbReference>
<dbReference type="Ensembl" id="ENST00000368167.8">
    <molecule id="P15812-1"/>
    <property type="protein sequence ID" value="ENSP00000357149.3"/>
    <property type="gene ID" value="ENSG00000158488.16"/>
</dbReference>
<dbReference type="Ensembl" id="ENST00000444681.6">
    <molecule id="P15812-13"/>
    <property type="protein sequence ID" value="ENSP00000402906.2"/>
    <property type="gene ID" value="ENSG00000158488.16"/>
</dbReference>
<dbReference type="Ensembl" id="ENST00000452291.6">
    <molecule id="P15812-8"/>
    <property type="protein sequence ID" value="ENSP00000416228.2"/>
    <property type="gene ID" value="ENSG00000158488.16"/>
</dbReference>
<dbReference type="GeneID" id="913"/>
<dbReference type="KEGG" id="hsa:913"/>
<dbReference type="MANE-Select" id="ENST00000368167.8">
    <property type="protein sequence ID" value="ENSP00000357149.3"/>
    <property type="RefSeq nucleotide sequence ID" value="NM_030893.4"/>
    <property type="RefSeq protein sequence ID" value="NP_112155.2"/>
</dbReference>
<dbReference type="UCSC" id="uc001fry.4">
    <molecule id="P15812-1"/>
    <property type="organism name" value="human"/>
</dbReference>
<dbReference type="AGR" id="HGNC:1638"/>
<dbReference type="CTD" id="913"/>
<dbReference type="DisGeNET" id="913"/>
<dbReference type="GeneCards" id="CD1E"/>
<dbReference type="HGNC" id="HGNC:1638">
    <property type="gene designation" value="CD1E"/>
</dbReference>
<dbReference type="HPA" id="ENSG00000158488">
    <property type="expression patterns" value="Tissue enriched (lymphoid)"/>
</dbReference>
<dbReference type="MIM" id="188411">
    <property type="type" value="gene"/>
</dbReference>
<dbReference type="neXtProt" id="NX_P15812"/>
<dbReference type="OpenTargets" id="ENSG00000158488"/>
<dbReference type="PharmGKB" id="PA26197"/>
<dbReference type="VEuPathDB" id="HostDB:ENSG00000158488"/>
<dbReference type="eggNOG" id="ENOG502SJH6">
    <property type="taxonomic scope" value="Eukaryota"/>
</dbReference>
<dbReference type="GeneTree" id="ENSGT01120000271825"/>
<dbReference type="HOGENOM" id="CLU_047501_9_2_1"/>
<dbReference type="InParanoid" id="P15812"/>
<dbReference type="OMA" id="NHYRIIK"/>
<dbReference type="OrthoDB" id="8890485at2759"/>
<dbReference type="PAN-GO" id="P15812">
    <property type="GO annotations" value="9 GO annotations based on evolutionary models"/>
</dbReference>
<dbReference type="PhylomeDB" id="P15812"/>
<dbReference type="TreeFam" id="TF336723"/>
<dbReference type="PathwayCommons" id="P15812"/>
<dbReference type="SignaLink" id="P15812"/>
<dbReference type="BioGRID-ORCS" id="913">
    <property type="hits" value="10 hits in 1142 CRISPR screens"/>
</dbReference>
<dbReference type="EvolutionaryTrace" id="P15812"/>
<dbReference type="GeneWiki" id="CD1E"/>
<dbReference type="GenomeRNAi" id="913"/>
<dbReference type="Pharos" id="P15812">
    <property type="development level" value="Tbio"/>
</dbReference>
<dbReference type="PRO" id="PR:P15812"/>
<dbReference type="Proteomes" id="UP000005640">
    <property type="component" value="Chromosome 1"/>
</dbReference>
<dbReference type="RNAct" id="P15812">
    <property type="molecule type" value="protein"/>
</dbReference>
<dbReference type="Bgee" id="ENSG00000158488">
    <property type="expression patterns" value="Expressed in thymus and 107 other cell types or tissues"/>
</dbReference>
<dbReference type="ExpressionAtlas" id="P15812">
    <property type="expression patterns" value="baseline and differential"/>
</dbReference>
<dbReference type="GO" id="GO:0005769">
    <property type="term" value="C:early endosome"/>
    <property type="evidence" value="ECO:0007669"/>
    <property type="project" value="UniProtKB-SubCell"/>
</dbReference>
<dbReference type="GO" id="GO:0009897">
    <property type="term" value="C:external side of plasma membrane"/>
    <property type="evidence" value="ECO:0000318"/>
    <property type="project" value="GO_Central"/>
</dbReference>
<dbReference type="GO" id="GO:0005615">
    <property type="term" value="C:extracellular space"/>
    <property type="evidence" value="ECO:0000318"/>
    <property type="project" value="GO_Central"/>
</dbReference>
<dbReference type="GO" id="GO:0005794">
    <property type="term" value="C:Golgi apparatus"/>
    <property type="evidence" value="ECO:0000314"/>
    <property type="project" value="HPA"/>
</dbReference>
<dbReference type="GO" id="GO:0000139">
    <property type="term" value="C:Golgi membrane"/>
    <property type="evidence" value="ECO:0007669"/>
    <property type="project" value="UniProtKB-SubCell"/>
</dbReference>
<dbReference type="GO" id="GO:0005770">
    <property type="term" value="C:late endosome"/>
    <property type="evidence" value="ECO:0007669"/>
    <property type="project" value="UniProtKB-SubCell"/>
</dbReference>
<dbReference type="GO" id="GO:0043202">
    <property type="term" value="C:lysosomal lumen"/>
    <property type="evidence" value="ECO:0007669"/>
    <property type="project" value="UniProtKB-SubCell"/>
</dbReference>
<dbReference type="GO" id="GO:0005730">
    <property type="term" value="C:nucleolus"/>
    <property type="evidence" value="ECO:0000314"/>
    <property type="project" value="HPA"/>
</dbReference>
<dbReference type="GO" id="GO:0005886">
    <property type="term" value="C:plasma membrane"/>
    <property type="evidence" value="ECO:0000303"/>
    <property type="project" value="UniProtKB"/>
</dbReference>
<dbReference type="GO" id="GO:0030883">
    <property type="term" value="F:endogenous lipid antigen binding"/>
    <property type="evidence" value="ECO:0000318"/>
    <property type="project" value="GO_Central"/>
</dbReference>
<dbReference type="GO" id="GO:0030884">
    <property type="term" value="F:exogenous lipid antigen binding"/>
    <property type="evidence" value="ECO:0000318"/>
    <property type="project" value="GO_Central"/>
</dbReference>
<dbReference type="GO" id="GO:0071723">
    <property type="term" value="F:lipopeptide binding"/>
    <property type="evidence" value="ECO:0000318"/>
    <property type="project" value="GO_Central"/>
</dbReference>
<dbReference type="GO" id="GO:0002250">
    <property type="term" value="P:adaptive immune response"/>
    <property type="evidence" value="ECO:0007669"/>
    <property type="project" value="UniProtKB-KW"/>
</dbReference>
<dbReference type="GO" id="GO:0048006">
    <property type="term" value="P:antigen processing and presentation, endogenous lipid antigen via MHC class Ib"/>
    <property type="evidence" value="ECO:0000318"/>
    <property type="project" value="GO_Central"/>
</dbReference>
<dbReference type="GO" id="GO:0048007">
    <property type="term" value="P:antigen processing and presentation, exogenous lipid antigen via MHC class Ib"/>
    <property type="evidence" value="ECO:0000318"/>
    <property type="project" value="GO_Central"/>
</dbReference>
<dbReference type="GO" id="GO:0006955">
    <property type="term" value="P:immune response"/>
    <property type="evidence" value="ECO:0000318"/>
    <property type="project" value="GO_Central"/>
</dbReference>
<dbReference type="GO" id="GO:0001916">
    <property type="term" value="P:positive regulation of T cell mediated cytotoxicity"/>
    <property type="evidence" value="ECO:0000318"/>
    <property type="project" value="GO_Central"/>
</dbReference>
<dbReference type="CDD" id="cd21029">
    <property type="entry name" value="IgC1_CD1"/>
    <property type="match status" value="1"/>
</dbReference>
<dbReference type="FunFam" id="2.60.40.10:FF:000254">
    <property type="entry name" value="Antigen-presenting glycoprotein CD1d1"/>
    <property type="match status" value="1"/>
</dbReference>
<dbReference type="FunFam" id="3.30.500.10:FF:000002">
    <property type="entry name" value="Antigen-presenting glycoprotein CD1d1"/>
    <property type="match status" value="1"/>
</dbReference>
<dbReference type="Gene3D" id="2.60.40.10">
    <property type="entry name" value="Immunoglobulins"/>
    <property type="match status" value="1"/>
</dbReference>
<dbReference type="Gene3D" id="3.30.500.10">
    <property type="entry name" value="MHC class I-like antigen recognition-like"/>
    <property type="match status" value="1"/>
</dbReference>
<dbReference type="InterPro" id="IPR007110">
    <property type="entry name" value="Ig-like_dom"/>
</dbReference>
<dbReference type="InterPro" id="IPR036179">
    <property type="entry name" value="Ig-like_dom_sf"/>
</dbReference>
<dbReference type="InterPro" id="IPR013783">
    <property type="entry name" value="Ig-like_fold"/>
</dbReference>
<dbReference type="InterPro" id="IPR003597">
    <property type="entry name" value="Ig_C1-set"/>
</dbReference>
<dbReference type="InterPro" id="IPR050208">
    <property type="entry name" value="MHC_class-I_related"/>
</dbReference>
<dbReference type="InterPro" id="IPR011161">
    <property type="entry name" value="MHC_I-like_Ag-recog"/>
</dbReference>
<dbReference type="InterPro" id="IPR037055">
    <property type="entry name" value="MHC_I-like_Ag-recog_sf"/>
</dbReference>
<dbReference type="InterPro" id="IPR011162">
    <property type="entry name" value="MHC_I/II-like_Ag-recog"/>
</dbReference>
<dbReference type="PANTHER" id="PTHR16675">
    <property type="entry name" value="MHC CLASS I-RELATED"/>
    <property type="match status" value="1"/>
</dbReference>
<dbReference type="PANTHER" id="PTHR16675:SF146">
    <property type="entry name" value="T-CELL SURFACE GLYCOPROTEIN CD1E, MEMBRANE-ASSOCIATED"/>
    <property type="match status" value="1"/>
</dbReference>
<dbReference type="Pfam" id="PF07654">
    <property type="entry name" value="C1-set"/>
    <property type="match status" value="1"/>
</dbReference>
<dbReference type="Pfam" id="PF16497">
    <property type="entry name" value="MHC_I_3"/>
    <property type="match status" value="1"/>
</dbReference>
<dbReference type="SMART" id="SM00407">
    <property type="entry name" value="IGc1"/>
    <property type="match status" value="1"/>
</dbReference>
<dbReference type="SUPFAM" id="SSF48726">
    <property type="entry name" value="Immunoglobulin"/>
    <property type="match status" value="1"/>
</dbReference>
<dbReference type="SUPFAM" id="SSF54452">
    <property type="entry name" value="MHC antigen-recognition domain"/>
    <property type="match status" value="1"/>
</dbReference>
<dbReference type="PROSITE" id="PS50835">
    <property type="entry name" value="IG_LIKE"/>
    <property type="match status" value="1"/>
</dbReference>
<name>CD1E_HUMAN</name>
<protein>
    <recommendedName>
        <fullName>T-cell surface glycoprotein CD1e, membrane-associated</fullName>
        <shortName>hCD1e</shortName>
    </recommendedName>
    <alternativeName>
        <fullName>R2G1</fullName>
    </alternativeName>
    <cdAntigenName>CD1e</cdAntigenName>
    <component>
        <recommendedName>
            <fullName>T-cell surface glycoprotein CD1e, soluble</fullName>
            <shortName>sCD1e</shortName>
        </recommendedName>
    </component>
</protein>
<feature type="signal peptide" evidence="1">
    <location>
        <begin position="1"/>
        <end position="19"/>
    </location>
</feature>
<feature type="chain" id="PRO_0000014582" description="T-cell surface glycoprotein CD1e, membrane-associated">
    <location>
        <begin position="20"/>
        <end position="388"/>
    </location>
</feature>
<feature type="propeptide" id="PRO_0000379780" description="Removed in sCD1e">
    <location>
        <begin position="20"/>
        <end position="31"/>
    </location>
</feature>
<feature type="chain" id="PRO_0000379781" description="T-cell surface glycoprotein CD1e, soluble">
    <location>
        <begin position="32"/>
        <end position="388"/>
    </location>
</feature>
<feature type="transmembrane region" description="Helical" evidence="1">
    <location>
        <begin position="305"/>
        <end position="325"/>
    </location>
</feature>
<feature type="domain" description="Ig-like">
    <location>
        <begin position="191"/>
        <end position="301"/>
    </location>
</feature>
<feature type="glycosylation site" description="N-linked (GlcNAc...) asparagine" evidence="1">
    <location>
        <position position="47"/>
    </location>
</feature>
<feature type="glycosylation site" description="N-linked (GlcNAc...) asparagine" evidence="1">
    <location>
        <position position="84"/>
    </location>
</feature>
<feature type="disulfide bond" evidence="2">
    <location>
        <begin position="230"/>
        <end position="285"/>
    </location>
</feature>
<feature type="splice variant" id="VSP_037708" description="In isoform 8, isoform 9, isoform 10, isoform 11 and isoform 12." evidence="12">
    <location>
        <begin position="20"/>
        <end position="208"/>
    </location>
</feature>
<feature type="splice variant" id="VSP_046961" description="In isoform 13." evidence="13">
    <original>APQALQSYHLAAEEQLSFRMLQTSSFANHSWAHSEGSGWLGDLQTHGWDTVLGTIRFLKPWSHGNFSKQELKNLQSLFQLYFHSFIQIVQASAGQFQLEY</original>
    <variation>D</variation>
    <location>
        <begin position="20"/>
        <end position="119"/>
    </location>
</feature>
<feature type="splice variant" id="VSP_037709" description="In isoform 5, isoform 6 and isoform 7." evidence="12">
    <original>YPFEIQILAGCRMNAPQIFLNMAYQGSDFLSFQGISWEPSPGAGIRAQNICKVLNRYLDIKEILQSLLGHTCPRFLAGLMEAGESELKRKV</original>
    <variation>L</variation>
    <location>
        <begin position="119"/>
        <end position="209"/>
    </location>
</feature>
<feature type="splice variant" id="VSP_037710" description="In isoform 4, isoform 7, isoform 11 and isoform 12." evidence="12">
    <location>
        <begin position="248"/>
        <end position="302"/>
    </location>
</feature>
<feature type="splice variant" id="VSP_037711" description="In isoform 3 and isoform 10." evidence="12">
    <original>YLRATLDVAAGEAAGLSCRVKHS</original>
    <variation>WIFHLSHPDLFDCDSYPGHIGCS</variation>
    <location>
        <begin position="268"/>
        <end position="290"/>
    </location>
</feature>
<feature type="splice variant" id="VSP_037712" description="In isoform 3 and isoform 10." evidence="12">
    <location>
        <begin position="291"/>
        <end position="388"/>
    </location>
</feature>
<feature type="splice variant" id="VSP_037713" description="In isoform 2, isoform 4, isoform 6, isoform 7, isoform 9 and isoform 12." evidence="12">
    <location>
        <begin position="334"/>
        <end position="345"/>
    </location>
</feature>
<feature type="sequence variant" id="VAR_056035" description="In dbSNP:rs3180089.">
    <original>G</original>
    <variation>E</variation>
    <location>
        <position position="15"/>
    </location>
</feature>
<feature type="sequence variant" id="VAR_058324" description="In allele CD1E*05; dbSNP:rs2873587." evidence="6">
    <original>H</original>
    <variation>R</variation>
    <location>
        <position position="102"/>
    </location>
</feature>
<feature type="sequence variant" id="VAR_010191" description="In allele CD1E*02, allele CD1E*05 and CD1E*06; dbSNP:rs1065457." evidence="3 4 6">
    <original>Q</original>
    <variation>R</variation>
    <location>
        <position position="106"/>
    </location>
</feature>
<feature type="sequence variant" id="VAR_058325" description="In allele CD1E*05; dbSNP:rs35116276." evidence="6">
    <original>S</original>
    <variation>N</variation>
    <location>
        <position position="149"/>
    </location>
</feature>
<feature type="sequence variant" id="VAR_010192" description="In allele CD1E*03; dbSNP:rs199655202." evidence="5 6">
    <original>R</original>
    <variation>W</variation>
    <location>
        <position position="164"/>
    </location>
</feature>
<feature type="sequence variant" id="VAR_010193" description="In allele CD1E*04; impairs localization to late endosomal compartments and lipid antigen presentation; dbSNP:rs200741122." evidence="5 9">
    <original>L</original>
    <variation>P</variation>
    <location>
        <position position="194"/>
    </location>
</feature>
<feature type="sequence conflict" description="In Ref. 3; BAG64215." evidence="14" ref="3">
    <original>V</original>
    <variation>A</variation>
    <location>
        <position position="209"/>
    </location>
</feature>
<feature type="sequence conflict" description="In Ref. 3; BAG64215." evidence="14" ref="3">
    <original>E</original>
    <variation>G</variation>
    <location>
        <position position="248"/>
    </location>
</feature>
<feature type="strand" evidence="15">
    <location>
        <begin position="37"/>
        <end position="46"/>
    </location>
</feature>
<feature type="strand" evidence="15">
    <location>
        <begin position="52"/>
        <end position="59"/>
    </location>
</feature>
<feature type="strand" evidence="15">
    <location>
        <begin position="62"/>
        <end position="68"/>
    </location>
</feature>
<feature type="turn" evidence="15">
    <location>
        <begin position="69"/>
        <end position="72"/>
    </location>
</feature>
<feature type="strand" evidence="15">
    <location>
        <begin position="73"/>
        <end position="75"/>
    </location>
</feature>
<feature type="helix" evidence="15">
    <location>
        <begin position="79"/>
        <end position="82"/>
    </location>
</feature>
<feature type="helix" evidence="15">
    <location>
        <begin position="87"/>
        <end position="111"/>
    </location>
</feature>
<feature type="turn" evidence="15">
    <location>
        <begin position="112"/>
        <end position="116"/>
    </location>
</feature>
<feature type="strand" evidence="15">
    <location>
        <begin position="119"/>
        <end position="129"/>
    </location>
</feature>
<feature type="strand" evidence="15">
    <location>
        <begin position="132"/>
        <end position="134"/>
    </location>
</feature>
<feature type="strand" evidence="15">
    <location>
        <begin position="136"/>
        <end position="139"/>
    </location>
</feature>
<feature type="strand" evidence="15">
    <location>
        <begin position="142"/>
        <end position="145"/>
    </location>
</feature>
<feature type="turn" evidence="15">
    <location>
        <begin position="159"/>
        <end position="161"/>
    </location>
</feature>
<feature type="helix" evidence="15">
    <location>
        <begin position="163"/>
        <end position="174"/>
    </location>
</feature>
<feature type="helix" evidence="15">
    <location>
        <begin position="176"/>
        <end position="201"/>
    </location>
</feature>
<feature type="turn" evidence="15">
    <location>
        <begin position="202"/>
        <end position="205"/>
    </location>
</feature>
<feature type="strand" evidence="15">
    <location>
        <begin position="222"/>
        <end position="224"/>
    </location>
</feature>
<feature type="strand" evidence="15">
    <location>
        <begin position="228"/>
        <end position="230"/>
    </location>
</feature>
<feature type="strand" evidence="15">
    <location>
        <begin position="232"/>
        <end position="234"/>
    </location>
</feature>
<feature type="strand" evidence="15">
    <location>
        <begin position="236"/>
        <end position="238"/>
    </location>
</feature>
<feature type="strand" evidence="15">
    <location>
        <begin position="241"/>
        <end position="244"/>
    </location>
</feature>
<feature type="strand" evidence="15">
    <location>
        <begin position="260"/>
        <end position="262"/>
    </location>
</feature>
<feature type="turn" evidence="15">
    <location>
        <begin position="263"/>
        <end position="265"/>
    </location>
</feature>
<feature type="strand" evidence="15">
    <location>
        <begin position="266"/>
        <end position="269"/>
    </location>
</feature>
<feature type="strand" evidence="15">
    <location>
        <begin position="271"/>
        <end position="273"/>
    </location>
</feature>
<feature type="helix" evidence="15">
    <location>
        <begin position="277"/>
        <end position="280"/>
    </location>
</feature>
<feature type="strand" evidence="15">
    <location>
        <begin position="285"/>
        <end position="288"/>
    </location>
</feature>
<feature type="turn" evidence="15">
    <location>
        <begin position="290"/>
        <end position="292"/>
    </location>
</feature>
<feature type="strand" evidence="15">
    <location>
        <begin position="300"/>
        <end position="302"/>
    </location>
</feature>
<proteinExistence type="evidence at protein level"/>
<accession>P15812</accession>
<accession>B4DZV3</accession>
<accession>E7EP01</accession>
<accession>Q5TDJ9</accession>
<accession>Q5TDK3</accession>
<accession>Q5TDK4</accession>
<accession>Q5TDK5</accession>
<accession>Q5TDK6</accession>
<accession>Q5TDK8</accession>
<accession>Q5TDL1</accession>
<accession>Q712E4</accession>
<accession>Q712E5</accession>
<accession>Q712E6</accession>
<accession>Q712E7</accession>
<accession>Q712E8</accession>
<accession>Q712E9</accession>
<accession>Q712F0</accession>
<accession>Q712F1</accession>
<accession>Q712F2</accession>
<accession>Q712F3</accession>
<accession>Q712F4</accession>
<accession>Q712F5</accession>
<accession>Q96TD0</accession>
<accession>Q96TD1</accession>
<accession>Q9UMM1</accession>
<accession>Q9Y5M3</accession>
<evidence type="ECO:0000255" key="1"/>
<evidence type="ECO:0000255" key="2">
    <source>
        <dbReference type="PROSITE-ProRule" id="PRU00114"/>
    </source>
</evidence>
<evidence type="ECO:0000269" key="3">
    <source>
    </source>
</evidence>
<evidence type="ECO:0000269" key="4">
    <source>
    </source>
</evidence>
<evidence type="ECO:0000269" key="5">
    <source>
    </source>
</evidence>
<evidence type="ECO:0000269" key="6">
    <source>
    </source>
</evidence>
<evidence type="ECO:0000269" key="7">
    <source>
    </source>
</evidence>
<evidence type="ECO:0000269" key="8">
    <source>
    </source>
</evidence>
<evidence type="ECO:0000269" key="9">
    <source>
    </source>
</evidence>
<evidence type="ECO:0000269" key="10">
    <source>
    </source>
</evidence>
<evidence type="ECO:0000269" key="11">
    <source>
    </source>
</evidence>
<evidence type="ECO:0000303" key="12">
    <source>
    </source>
</evidence>
<evidence type="ECO:0000303" key="13">
    <source>
    </source>
</evidence>
<evidence type="ECO:0000305" key="14"/>
<evidence type="ECO:0007829" key="15">
    <source>
        <dbReference type="PDB" id="3S6C"/>
    </source>
</evidence>
<organism>
    <name type="scientific">Homo sapiens</name>
    <name type="common">Human</name>
    <dbReference type="NCBI Taxonomy" id="9606"/>
    <lineage>
        <taxon>Eukaryota</taxon>
        <taxon>Metazoa</taxon>
        <taxon>Chordata</taxon>
        <taxon>Craniata</taxon>
        <taxon>Vertebrata</taxon>
        <taxon>Euteleostomi</taxon>
        <taxon>Mammalia</taxon>
        <taxon>Eutheria</taxon>
        <taxon>Euarchontoglires</taxon>
        <taxon>Primates</taxon>
        <taxon>Haplorrhini</taxon>
        <taxon>Catarrhini</taxon>
        <taxon>Hominidae</taxon>
        <taxon>Homo</taxon>
    </lineage>
</organism>